<reference key="1">
    <citation type="journal article" date="2004" name="Science">
        <title>The Ashbya gossypii genome as a tool for mapping the ancient Saccharomyces cerevisiae genome.</title>
        <authorList>
            <person name="Dietrich F.S."/>
            <person name="Voegeli S."/>
            <person name="Brachat S."/>
            <person name="Lerch A."/>
            <person name="Gates K."/>
            <person name="Steiner S."/>
            <person name="Mohr C."/>
            <person name="Poehlmann R."/>
            <person name="Luedi P."/>
            <person name="Choi S."/>
            <person name="Wing R.A."/>
            <person name="Flavier A."/>
            <person name="Gaffney T.D."/>
            <person name="Philippsen P."/>
        </authorList>
    </citation>
    <scope>NUCLEOTIDE SEQUENCE [LARGE SCALE GENOMIC DNA]</scope>
    <source>
        <strain>ATCC 10895 / CBS 109.51 / FGSC 9923 / NRRL Y-1056</strain>
    </source>
</reference>
<reference key="2">
    <citation type="journal article" date="2013" name="G3 (Bethesda)">
        <title>Genomes of Ashbya fungi isolated from insects reveal four mating-type loci, numerous translocations, lack of transposons, and distinct gene duplications.</title>
        <authorList>
            <person name="Dietrich F.S."/>
            <person name="Voegeli S."/>
            <person name="Kuo S."/>
            <person name="Philippsen P."/>
        </authorList>
    </citation>
    <scope>GENOME REANNOTATION</scope>
    <source>
        <strain>ATCC 10895 / CBS 109.51 / FGSC 9923 / NRRL Y-1056</strain>
    </source>
</reference>
<feature type="chain" id="PRO_0000208641" description="F-actin-capping protein subunit alpha">
    <location>
        <begin position="1"/>
        <end position="261"/>
    </location>
</feature>
<keyword id="KW-0117">Actin capping</keyword>
<keyword id="KW-0009">Actin-binding</keyword>
<keyword id="KW-1185">Reference proteome</keyword>
<comment type="function">
    <text evidence="1">F-actin-capping proteins bind in a Ca(2+)-independent manner to the fast growing ends of actin filaments (barbed end) thereby blocking the exchange of subunits at these ends. Unlike other capping proteins (such as gelsolin and severin), these proteins do not sever actin filaments (By similarity).</text>
</comment>
<comment type="subunit">
    <text evidence="1">Heterodimer of an alpha and a beta subunit.</text>
</comment>
<comment type="similarity">
    <text evidence="2">Belongs to the F-actin-capping protein alpha subunit family.</text>
</comment>
<sequence length="261" mass="29684">MSKFSDIITQLLFDAPPREINSVYDSLVIITEDTDNDTLLDALKRCLVAKRLPIDVEGSPTIVTEYNKDGAKYFDPFKKVLFSVDCLDRVGLDIEPHESETTPYQEKLYEELQKYVAKNFPGDSACTVLPTGDDDELAIIIVSSKFSPSNYWSGYWKSEYIYSPEERSLTGRIDVVVHYFEDGNVKFSTQEFIDKEDINDPISCIRALESEIETGLDESFSKLNQTQFAKLRRKLPVTRSKVNWGKAISNYRLGKDAAQGK</sequence>
<proteinExistence type="inferred from homology"/>
<evidence type="ECO:0000250" key="1"/>
<evidence type="ECO:0000305" key="2"/>
<organism>
    <name type="scientific">Eremothecium gossypii (strain ATCC 10895 / CBS 109.51 / FGSC 9923 / NRRL Y-1056)</name>
    <name type="common">Yeast</name>
    <name type="synonym">Ashbya gossypii</name>
    <dbReference type="NCBI Taxonomy" id="284811"/>
    <lineage>
        <taxon>Eukaryota</taxon>
        <taxon>Fungi</taxon>
        <taxon>Dikarya</taxon>
        <taxon>Ascomycota</taxon>
        <taxon>Saccharomycotina</taxon>
        <taxon>Saccharomycetes</taxon>
        <taxon>Saccharomycetales</taxon>
        <taxon>Saccharomycetaceae</taxon>
        <taxon>Eremothecium</taxon>
    </lineage>
</organism>
<accession>Q75DS4</accession>
<name>CAPZA_EREGS</name>
<gene>
    <name type="primary">CAP1</name>
    <name type="ordered locus">ABR007C</name>
</gene>
<protein>
    <recommendedName>
        <fullName>F-actin-capping protein subunit alpha</fullName>
    </recommendedName>
</protein>
<dbReference type="EMBL" id="AE016815">
    <property type="protein sequence ID" value="AAS50777.1"/>
    <property type="molecule type" value="Genomic_DNA"/>
</dbReference>
<dbReference type="RefSeq" id="NP_982953.1">
    <property type="nucleotide sequence ID" value="NM_208306.1"/>
</dbReference>
<dbReference type="SMR" id="Q75DS4"/>
<dbReference type="FunCoup" id="Q75DS4">
    <property type="interactions" value="870"/>
</dbReference>
<dbReference type="STRING" id="284811.Q75DS4"/>
<dbReference type="EnsemblFungi" id="AAS50777">
    <property type="protein sequence ID" value="AAS50777"/>
    <property type="gene ID" value="AGOS_ABR007C"/>
</dbReference>
<dbReference type="GeneID" id="4619045"/>
<dbReference type="KEGG" id="ago:AGOS_ABR007C"/>
<dbReference type="eggNOG" id="KOG0836">
    <property type="taxonomic scope" value="Eukaryota"/>
</dbReference>
<dbReference type="HOGENOM" id="CLU_045161_3_0_1"/>
<dbReference type="InParanoid" id="Q75DS4"/>
<dbReference type="OMA" id="VACIEDH"/>
<dbReference type="OrthoDB" id="340550at2759"/>
<dbReference type="Proteomes" id="UP000000591">
    <property type="component" value="Chromosome II"/>
</dbReference>
<dbReference type="GO" id="GO:0030479">
    <property type="term" value="C:actin cortical patch"/>
    <property type="evidence" value="ECO:0000318"/>
    <property type="project" value="GO_Central"/>
</dbReference>
<dbReference type="GO" id="GO:0005934">
    <property type="term" value="C:cellular bud tip"/>
    <property type="evidence" value="ECO:0007669"/>
    <property type="project" value="EnsemblFungi"/>
</dbReference>
<dbReference type="GO" id="GO:0030863">
    <property type="term" value="C:cortical cytoskeleton"/>
    <property type="evidence" value="ECO:0000318"/>
    <property type="project" value="GO_Central"/>
</dbReference>
<dbReference type="GO" id="GO:0008290">
    <property type="term" value="C:F-actin capping protein complex"/>
    <property type="evidence" value="ECO:0000318"/>
    <property type="project" value="GO_Central"/>
</dbReference>
<dbReference type="GO" id="GO:0000131">
    <property type="term" value="C:incipient cellular bud site"/>
    <property type="evidence" value="ECO:0007669"/>
    <property type="project" value="EnsemblFungi"/>
</dbReference>
<dbReference type="GO" id="GO:0110085">
    <property type="term" value="C:mitotic actomyosin contractile ring"/>
    <property type="evidence" value="ECO:0007669"/>
    <property type="project" value="EnsemblFungi"/>
</dbReference>
<dbReference type="GO" id="GO:0051015">
    <property type="term" value="F:actin filament binding"/>
    <property type="evidence" value="ECO:0000318"/>
    <property type="project" value="GO_Central"/>
</dbReference>
<dbReference type="GO" id="GO:0030036">
    <property type="term" value="P:actin cytoskeleton organization"/>
    <property type="evidence" value="ECO:0000318"/>
    <property type="project" value="GO_Central"/>
</dbReference>
<dbReference type="GO" id="GO:0051016">
    <property type="term" value="P:barbed-end actin filament capping"/>
    <property type="evidence" value="ECO:0000318"/>
    <property type="project" value="GO_Central"/>
</dbReference>
<dbReference type="FunFam" id="3.90.1150.210:FF:000003">
    <property type="entry name" value="F-actin-capping protein subunit alpha"/>
    <property type="match status" value="1"/>
</dbReference>
<dbReference type="Gene3D" id="3.30.1140.60">
    <property type="entry name" value="F-actin capping protein, alpha subunit"/>
    <property type="match status" value="1"/>
</dbReference>
<dbReference type="Gene3D" id="3.90.1150.210">
    <property type="entry name" value="F-actin capping protein, beta subunit"/>
    <property type="match status" value="1"/>
</dbReference>
<dbReference type="InterPro" id="IPR002189">
    <property type="entry name" value="CapZ_alpha"/>
</dbReference>
<dbReference type="InterPro" id="IPR037282">
    <property type="entry name" value="CapZ_alpha/beta"/>
</dbReference>
<dbReference type="InterPro" id="IPR042276">
    <property type="entry name" value="CapZ_alpha/beta_2"/>
</dbReference>
<dbReference type="InterPro" id="IPR042489">
    <property type="entry name" value="CapZ_alpha_1"/>
</dbReference>
<dbReference type="InterPro" id="IPR017865">
    <property type="entry name" value="F-actin_cap_asu_CS"/>
</dbReference>
<dbReference type="PANTHER" id="PTHR10653">
    <property type="entry name" value="F-ACTIN-CAPPING PROTEIN SUBUNIT ALPHA"/>
    <property type="match status" value="1"/>
</dbReference>
<dbReference type="PANTHER" id="PTHR10653:SF0">
    <property type="entry name" value="F-ACTIN-CAPPING PROTEIN SUBUNIT ALPHA"/>
    <property type="match status" value="1"/>
</dbReference>
<dbReference type="Pfam" id="PF01267">
    <property type="entry name" value="F-actin_cap_A"/>
    <property type="match status" value="1"/>
</dbReference>
<dbReference type="PRINTS" id="PR00191">
    <property type="entry name" value="FACTINCAPA"/>
</dbReference>
<dbReference type="SUPFAM" id="SSF90096">
    <property type="entry name" value="Subunits of heterodimeric actin filament capping protein Capz"/>
    <property type="match status" value="1"/>
</dbReference>
<dbReference type="PROSITE" id="PS00748">
    <property type="entry name" value="F_ACTIN_CAPPING_A_1"/>
    <property type="match status" value="1"/>
</dbReference>